<organism evidence="6">
    <name type="scientific">Caenorhabditis elegans</name>
    <dbReference type="NCBI Taxonomy" id="6239"/>
    <lineage>
        <taxon>Eukaryota</taxon>
        <taxon>Metazoa</taxon>
        <taxon>Ecdysozoa</taxon>
        <taxon>Nematoda</taxon>
        <taxon>Chromadorea</taxon>
        <taxon>Rhabditida</taxon>
        <taxon>Rhabditina</taxon>
        <taxon>Rhabditomorpha</taxon>
        <taxon>Rhabditoidea</taxon>
        <taxon>Rhabditidae</taxon>
        <taxon>Peloderinae</taxon>
        <taxon>Caenorhabditis</taxon>
    </lineage>
</organism>
<accession>G5EGU2</accession>
<accession>G5EEU5</accession>
<keyword id="KW-0025">Alternative splicing</keyword>
<keyword id="KW-1003">Cell membrane</keyword>
<keyword id="KW-0963">Cytoplasm</keyword>
<keyword id="KW-0378">Hydrolase</keyword>
<keyword id="KW-0472">Membrane</keyword>
<keyword id="KW-0904">Protein phosphatase</keyword>
<keyword id="KW-1185">Reference proteome</keyword>
<proteinExistence type="evidence at transcript level"/>
<name>EAK6_CAEEL</name>
<sequence length="405" mass="48334">MTNIREDENIFMFLCEKWILINKNHIWNRINQRINIIADFDRYQRARTISEGQRTENIHRNIYGAVPYDYNLVNLTSTQRNPLGYINASVAEFPEIGRHYIITGAAQDTQIPFFWQMVFEQKSPAIVMLLEDVELGIEKSDKYFPNNTREELKFGIYDITCKEFVKRNILEYRLLEVSVGNETHQVHHYKFHGWTEFNLPKYEDFMAFYNTMKEVGVPLLAVMKNNCMSSFFKKYHHTPPTNAPIIQCSTGGARCGVFIIIDILINLIDNRIKNSYSIEWWMLKVRSKRNHSALTNQQHSFIYDIIIKYIRTRHNQLRHLEKYLEAHANTVRMIDSTNTEDVDKFIKPRDWIVDFDERDRLIGKLQFRKRLKIEKDQVSEQKLVHLKSQLHLFQDTYKYESYVLQ</sequence>
<gene>
    <name evidence="8" type="primary">eak-6</name>
    <name evidence="8" type="ORF">F10G8.4</name>
</gene>
<feature type="chain" id="PRO_0000436048" description="Tyrosine-protein phosphatase non-receptor type eak-6" evidence="4">
    <location>
        <begin position="1"/>
        <end position="405"/>
    </location>
</feature>
<feature type="domain" description="Tyrosine-protein phosphatase" evidence="1">
    <location>
        <begin position="30"/>
        <end position="309"/>
    </location>
</feature>
<feature type="active site" description="Phosphocysteine intermediate" evidence="1">
    <location>
        <position position="248"/>
    </location>
</feature>
<feature type="splice variant" id="VSP_058227" description="In isoform a." evidence="4">
    <location>
        <begin position="377"/>
        <end position="393"/>
    </location>
</feature>
<comment type="function">
    <text evidence="2">Putative phosphatase which, together with eak-4 and sdf-9, negatively regulates dauer larva formation downstream of insulin-like receptor daf-2 and in parallel of age-1, pdk-1 and akt-1.</text>
</comment>
<comment type="catalytic activity">
    <reaction evidence="4">
        <text>O-phospho-L-tyrosyl-[protein] + H2O = L-tyrosyl-[protein] + phosphate</text>
        <dbReference type="Rhea" id="RHEA:10684"/>
        <dbReference type="Rhea" id="RHEA-COMP:10136"/>
        <dbReference type="Rhea" id="RHEA-COMP:20101"/>
        <dbReference type="ChEBI" id="CHEBI:15377"/>
        <dbReference type="ChEBI" id="CHEBI:43474"/>
        <dbReference type="ChEBI" id="CHEBI:46858"/>
        <dbReference type="ChEBI" id="CHEBI:61978"/>
        <dbReference type="EC" id="3.1.3.48"/>
    </reaction>
</comment>
<comment type="subcellular location">
    <subcellularLocation>
        <location evidence="2">Cytoplasm</location>
    </subcellularLocation>
    <subcellularLocation>
        <location evidence="2">Cell membrane</location>
        <topology evidence="2">Peripheral membrane protein</topology>
    </subcellularLocation>
</comment>
<comment type="alternative products">
    <event type="alternative splicing"/>
    <isoform>
        <id>G5EGU2-1</id>
        <name evidence="8">b</name>
        <name evidence="3">EAK-6L</name>
        <sequence type="displayed"/>
    </isoform>
    <isoform>
        <id>G5EGU2-2</id>
        <name evidence="7">a</name>
        <name evidence="3">EAK-6S</name>
        <sequence type="described" ref="VSP_058227"/>
    </isoform>
</comment>
<comment type="tissue specificity">
    <text evidence="2">Expressed in the 2 embryonic head hypodermal cells XXXL/R.</text>
</comment>
<comment type="disruption phenotype">
    <text evidence="2">Moderate increase in constitutive dauer larva formation at 27 degrees Celsius. Increases constitutive dauer larva formation at 25 degrees Celsius in akt-1 mg306, age-1 hx546 or pdk-1 sa709 mutant backgrounds. Normal lifespan.</text>
</comment>
<comment type="similarity">
    <text evidence="4">Belongs to the protein-tyrosine phosphatase family.</text>
</comment>
<comment type="caution">
    <text evidence="2">Its phosphatase activity is uncertain. Lacks in vitro phosphatase activity with p-nitrophenylphosphate, even if the catalytic Cys is conserved.</text>
</comment>
<protein>
    <recommendedName>
        <fullName evidence="4">Tyrosine-protein phosphatase non-receptor type eak-6</fullName>
        <ecNumber evidence="4">3.1.3.48</ecNumber>
    </recommendedName>
    <alternativeName>
        <fullName evidence="8">Enhancer of akt-1 null 6</fullName>
    </alternativeName>
</protein>
<dbReference type="EC" id="3.1.3.48" evidence="4"/>
<dbReference type="EMBL" id="DQ907009">
    <property type="protein sequence ID" value="ABI83733.1"/>
    <property type="molecule type" value="mRNA"/>
</dbReference>
<dbReference type="EMBL" id="DQ907010">
    <property type="protein sequence ID" value="ABI83734.1"/>
    <property type="molecule type" value="mRNA"/>
</dbReference>
<dbReference type="EMBL" id="BX284601">
    <property type="protein sequence ID" value="CAP16268.1"/>
    <property type="molecule type" value="Genomic_DNA"/>
</dbReference>
<dbReference type="EMBL" id="BX284601">
    <property type="protein sequence ID" value="CAP16269.1"/>
    <property type="molecule type" value="Genomic_DNA"/>
</dbReference>
<dbReference type="RefSeq" id="NP_001122448.1">
    <molecule id="G5EGU2-2"/>
    <property type="nucleotide sequence ID" value="NM_001128976.3"/>
</dbReference>
<dbReference type="RefSeq" id="NP_001122449.1">
    <molecule id="G5EGU2-1"/>
    <property type="nucleotide sequence ID" value="NM_001128977.1"/>
</dbReference>
<dbReference type="SMR" id="G5EGU2"/>
<dbReference type="FunCoup" id="G5EGU2">
    <property type="interactions" value="93"/>
</dbReference>
<dbReference type="STRING" id="6239.F10G8.4b.1"/>
<dbReference type="PaxDb" id="6239-F10G8.4b"/>
<dbReference type="EnsemblMetazoa" id="F10G8.4a.1">
    <molecule id="G5EGU2-2"/>
    <property type="protein sequence ID" value="F10G8.4a.1"/>
    <property type="gene ID" value="WBGene00008663"/>
</dbReference>
<dbReference type="EnsemblMetazoa" id="F10G8.4b.1">
    <molecule id="G5EGU2-1"/>
    <property type="protein sequence ID" value="F10G8.4b.1"/>
    <property type="gene ID" value="WBGene00008663"/>
</dbReference>
<dbReference type="GeneID" id="184324"/>
<dbReference type="KEGG" id="cel:CELE_F10G8.4"/>
<dbReference type="AGR" id="WB:WBGene00008663"/>
<dbReference type="CTD" id="184324"/>
<dbReference type="WormBase" id="F10G8.4a">
    <molecule id="G5EGU2-2"/>
    <property type="protein sequence ID" value="CE41631"/>
    <property type="gene ID" value="WBGene00008663"/>
    <property type="gene designation" value="eak-6"/>
</dbReference>
<dbReference type="WormBase" id="F10G8.4b">
    <molecule id="G5EGU2-1"/>
    <property type="protein sequence ID" value="CE41632"/>
    <property type="gene ID" value="WBGene00008663"/>
    <property type="gene designation" value="eak-6"/>
</dbReference>
<dbReference type="eggNOG" id="KOG0789">
    <property type="taxonomic scope" value="Eukaryota"/>
</dbReference>
<dbReference type="GeneTree" id="ENSGT00940000165839"/>
<dbReference type="InParanoid" id="G5EGU2"/>
<dbReference type="OMA" id="EHHAITI"/>
<dbReference type="OrthoDB" id="9450131at2759"/>
<dbReference type="PhylomeDB" id="G5EGU2"/>
<dbReference type="Reactome" id="R-CEL-6798695">
    <property type="pathway name" value="Neutrophil degranulation"/>
</dbReference>
<dbReference type="Reactome" id="R-CEL-6807004">
    <property type="pathway name" value="Negative regulation of MET activity"/>
</dbReference>
<dbReference type="PRO" id="PR:G5EGU2"/>
<dbReference type="Proteomes" id="UP000001940">
    <property type="component" value="Chromosome I"/>
</dbReference>
<dbReference type="Bgee" id="WBGene00008663">
    <property type="expression patterns" value="Expressed in larva"/>
</dbReference>
<dbReference type="GO" id="GO:0005737">
    <property type="term" value="C:cytoplasm"/>
    <property type="evidence" value="ECO:0007669"/>
    <property type="project" value="UniProtKB-SubCell"/>
</dbReference>
<dbReference type="GO" id="GO:0005886">
    <property type="term" value="C:plasma membrane"/>
    <property type="evidence" value="ECO:0000314"/>
    <property type="project" value="WormBase"/>
</dbReference>
<dbReference type="GO" id="GO:0004721">
    <property type="term" value="F:phosphoprotein phosphatase activity"/>
    <property type="evidence" value="ECO:0007669"/>
    <property type="project" value="UniProtKB-KW"/>
</dbReference>
<dbReference type="GO" id="GO:0040024">
    <property type="term" value="P:dauer larval development"/>
    <property type="evidence" value="ECO:0000315"/>
    <property type="project" value="WormBase"/>
</dbReference>
<dbReference type="GO" id="GO:0007165">
    <property type="term" value="P:signal transduction"/>
    <property type="evidence" value="ECO:0000318"/>
    <property type="project" value="GO_Central"/>
</dbReference>
<dbReference type="CDD" id="cd00047">
    <property type="entry name" value="PTPc"/>
    <property type="match status" value="1"/>
</dbReference>
<dbReference type="FunFam" id="3.90.190.10:FF:000233">
    <property type="entry name" value="Protein Tyrosine Phosphatase"/>
    <property type="match status" value="1"/>
</dbReference>
<dbReference type="Gene3D" id="3.90.190.10">
    <property type="entry name" value="Protein tyrosine phosphatase superfamily"/>
    <property type="match status" value="1"/>
</dbReference>
<dbReference type="InterPro" id="IPR029021">
    <property type="entry name" value="Prot-tyrosine_phosphatase-like"/>
</dbReference>
<dbReference type="InterPro" id="IPR050348">
    <property type="entry name" value="Protein-Tyr_Phosphatase"/>
</dbReference>
<dbReference type="InterPro" id="IPR000242">
    <property type="entry name" value="PTP_cat"/>
</dbReference>
<dbReference type="InterPro" id="IPR003595">
    <property type="entry name" value="Tyr_Pase_cat"/>
</dbReference>
<dbReference type="InterPro" id="IPR000387">
    <property type="entry name" value="Tyr_Pase_dom"/>
</dbReference>
<dbReference type="PANTHER" id="PTHR19134:SF561">
    <property type="entry name" value="PROTEIN TYROSINE PHOSPHATASE 36E, ISOFORM A"/>
    <property type="match status" value="1"/>
</dbReference>
<dbReference type="PANTHER" id="PTHR19134">
    <property type="entry name" value="RECEPTOR-TYPE TYROSINE-PROTEIN PHOSPHATASE"/>
    <property type="match status" value="1"/>
</dbReference>
<dbReference type="Pfam" id="PF00102">
    <property type="entry name" value="Y_phosphatase"/>
    <property type="match status" value="1"/>
</dbReference>
<dbReference type="PRINTS" id="PR00700">
    <property type="entry name" value="PRTYPHPHTASE"/>
</dbReference>
<dbReference type="SMART" id="SM00194">
    <property type="entry name" value="PTPc"/>
    <property type="match status" value="1"/>
</dbReference>
<dbReference type="SMART" id="SM00404">
    <property type="entry name" value="PTPc_motif"/>
    <property type="match status" value="1"/>
</dbReference>
<dbReference type="SUPFAM" id="SSF52799">
    <property type="entry name" value="(Phosphotyrosine protein) phosphatases II"/>
    <property type="match status" value="1"/>
</dbReference>
<dbReference type="PROSITE" id="PS50056">
    <property type="entry name" value="TYR_PHOSPHATASE_2"/>
    <property type="match status" value="1"/>
</dbReference>
<dbReference type="PROSITE" id="PS50055">
    <property type="entry name" value="TYR_PHOSPHATASE_PTP"/>
    <property type="match status" value="1"/>
</dbReference>
<evidence type="ECO:0000255" key="1">
    <source>
        <dbReference type="PROSITE-ProRule" id="PRU00160"/>
    </source>
</evidence>
<evidence type="ECO:0000269" key="2">
    <source>
    </source>
</evidence>
<evidence type="ECO:0000303" key="3">
    <source>
    </source>
</evidence>
<evidence type="ECO:0000305" key="4"/>
<evidence type="ECO:0000312" key="5">
    <source>
        <dbReference type="EMBL" id="ABI83734.1"/>
    </source>
</evidence>
<evidence type="ECO:0000312" key="6">
    <source>
        <dbReference type="Proteomes" id="UP000001940"/>
    </source>
</evidence>
<evidence type="ECO:0000312" key="7">
    <source>
        <dbReference type="WormBase" id="F10G8.4a"/>
    </source>
</evidence>
<evidence type="ECO:0000312" key="8">
    <source>
        <dbReference type="WormBase" id="F10G8.4b"/>
    </source>
</evidence>
<reference evidence="5" key="1">
    <citation type="journal article" date="2006" name="PLoS Genet.">
        <title>Two membrane-associated tyrosine phosphatase homologs potentiate C. elegans AKT-1/PKB signaling.</title>
        <authorList>
            <person name="Hu P.J."/>
            <person name="Xu J."/>
            <person name="Ruvkun G."/>
        </authorList>
    </citation>
    <scope>NUCLEOTIDE SEQUENCE [MRNA] (ISOFORMS A AND B)</scope>
    <scope>FUNCTION</scope>
    <scope>LACK OF IN VITRO PHOSPHATASE ACTIVITY</scope>
    <scope>SUBCELLULAR LOCATION</scope>
    <scope>TISSUE SPECIFICITY</scope>
    <scope>DISRUPTION PHENOTYPE</scope>
</reference>
<reference evidence="6" key="2">
    <citation type="journal article" date="1998" name="Science">
        <title>Genome sequence of the nematode C. elegans: a platform for investigating biology.</title>
        <authorList>
            <consortium name="The C. elegans sequencing consortium"/>
        </authorList>
    </citation>
    <scope>NUCLEOTIDE SEQUENCE [LARGE SCALE GENOMIC DNA]</scope>
    <source>
        <strain evidence="6">Bristol N2</strain>
    </source>
</reference>